<proteinExistence type="evidence at protein level"/>
<name>BGAL_ECOLI</name>
<comment type="catalytic activity">
    <reaction>
        <text>Hydrolysis of terminal non-reducing beta-D-galactose residues in beta-D-galactosides.</text>
        <dbReference type="EC" id="3.2.1.23"/>
    </reaction>
</comment>
<comment type="cofactor">
    <cofactor>
        <name>Mg(2+)</name>
        <dbReference type="ChEBI" id="CHEBI:18420"/>
    </cofactor>
    <cofactor>
        <name>Mn(2+)</name>
        <dbReference type="ChEBI" id="CHEBI:29035"/>
    </cofactor>
    <text>Binds 2 magnesium ions per monomer. Can also use manganese.</text>
</comment>
<comment type="cofactor">
    <cofactor>
        <name>Na(+)</name>
        <dbReference type="ChEBI" id="CHEBI:29101"/>
    </cofactor>
    <text>Binds 1 sodium ion per monomer.</text>
</comment>
<comment type="activity regulation">
    <text evidence="7">Inhibited by phenylethyl thio-beta-D-galactoside (PETG), isopropyl thio-beta-D-galactoside (IPTG), L-ribose, D-galactonolactone, lactose and 2-amino-D-galactose.</text>
</comment>
<comment type="biophysicochemical properties">
    <kinetics>
        <KM evidence="3 5 7 8 14 15">0.04 mM for p-nitrophenyl beta-D-galactoside</KM>
        <KM evidence="3 5 7 8 14 15">0.12 mM for o-nitrophenyl beta-D-galactoside</KM>
        <KM evidence="3 5 7 8 14 15">0.15 mM for 2,3-dinitrophenyl beta-D-galactopyranoside</KM>
        <KM evidence="3 5 7 8 14 15">0.41 mM for 2,5-dinitrophenyl beta-D-galactopyranoside</KM>
        <KM evidence="3 5 7 8 14 15">11.6 mM for p-nitrophenol-alpha-L-arabinopyranoside</KM>
        <KM evidence="3 5 7 8 14 15">16.9 mM for p-nitrophenol-beta-D-fucopyranoside</KM>
        <KM evidence="3 5 7 8 14 15">34 uM for p-nitrophenyl beta-D-galactoside (with magnesium as cofactor and 30 degrees Celsius)</KM>
        <KM evidence="3 5 7 8 14 15">140 uM for o-nitrophenyl beta-D-galactoside (with magnesium as cofactor and 30 degrees Celsius)</KM>
        <KM evidence="3 5 7 8 14 15">940 uM for allolactose (with magnesium as cofactor and 30 degrees Celsius)</KM>
        <KM evidence="3 5 7 8 14 15">1350 uM for lactose (with magnesium as cofactor and 30 degrees Celsius)</KM>
        <Vmax evidence="3 5 7 8 14 15">30.9 umol/min/mg enzyme with lactose as substrate (with magnesium as cofactor and 30 degrees Celsius)</Vmax>
        <Vmax evidence="3 5 7 8 14 15">49.7 umol/min/mg enzyme with allolactose as substrate (with magnesium as cofactor and 30 degrees Celsius)</Vmax>
        <Vmax evidence="3 5 7 8 14 15">59.7 umol/min/mg enzyme with p-nitrophenyl beta-D-galactoside as substrate (with magnesium as cofactor and 30 degrees Celsius)</Vmax>
        <Vmax evidence="3 5 7 8 14 15">360.0 umol/min/mg enzyme with o-nitrophenyl beta-D-galactoside as substrate (with magnesium as cofactor and 30 degrees Celsius)</Vmax>
        <text>The values for the enzymatic assays using manganese as cofactor are very close.</text>
    </kinetics>
</comment>
<comment type="subunit">
    <text evidence="1 4 7 13">Homotetramer.</text>
</comment>
<comment type="interaction">
    <interactant intactId="EBI-369998">
        <id>P00722</id>
    </interactant>
    <interactant intactId="EBI-369998">
        <id>P00722</id>
        <label>lacZ</label>
    </interactant>
    <organismsDiffer>false</organismsDiffer>
    <experiments>3</experiments>
</comment>
<comment type="induction">
    <text evidence="10">By allolactose.</text>
</comment>
<comment type="similarity">
    <text evidence="17">Belongs to the glycosyl hydrolase 2 family.</text>
</comment>
<gene>
    <name type="primary">lacZ</name>
    <name type="ordered locus">b0344</name>
    <name type="ordered locus">JW0335</name>
</gene>
<accession>P00722</accession>
<accession>Q2MC80</accession>
<dbReference type="EC" id="3.2.1.23"/>
<dbReference type="EMBL" id="J01636">
    <property type="protein sequence ID" value="AAA24053.1"/>
    <property type="molecule type" value="Genomic_DNA"/>
</dbReference>
<dbReference type="EMBL" id="V00296">
    <property type="protein sequence ID" value="CAA23573.1"/>
    <property type="molecule type" value="Genomic_DNA"/>
</dbReference>
<dbReference type="EMBL" id="U73857">
    <property type="protein sequence ID" value="AAB18068.1"/>
    <property type="molecule type" value="Genomic_DNA"/>
</dbReference>
<dbReference type="EMBL" id="U00096">
    <property type="protein sequence ID" value="AAC73447.1"/>
    <property type="molecule type" value="Genomic_DNA"/>
</dbReference>
<dbReference type="EMBL" id="AP009048">
    <property type="protein sequence ID" value="BAE76126.1"/>
    <property type="molecule type" value="Genomic_DNA"/>
</dbReference>
<dbReference type="EMBL" id="V00295">
    <property type="protein sequence ID" value="CAA23570.1"/>
    <property type="molecule type" value="Genomic_DNA"/>
</dbReference>
<dbReference type="PIR" id="A90981">
    <property type="entry name" value="GBEC"/>
</dbReference>
<dbReference type="RefSeq" id="NP_414878.1">
    <property type="nucleotide sequence ID" value="NC_000913.3"/>
</dbReference>
<dbReference type="RefSeq" id="WP_000177906.1">
    <property type="nucleotide sequence ID" value="NZ_SSZK01000061.1"/>
</dbReference>
<dbReference type="PDB" id="1DP0">
    <property type="method" value="X-ray"/>
    <property type="resolution" value="1.70 A"/>
    <property type="chains" value="A/B/C/D=10-1024"/>
</dbReference>
<dbReference type="PDB" id="1F4A">
    <property type="method" value="X-ray"/>
    <property type="resolution" value="2.80 A"/>
    <property type="chains" value="A/B/C/D=4-1024"/>
</dbReference>
<dbReference type="PDB" id="1F4H">
    <property type="method" value="X-ray"/>
    <property type="resolution" value="2.80 A"/>
    <property type="chains" value="A/B/C/D=4-1024"/>
</dbReference>
<dbReference type="PDB" id="1HN1">
    <property type="method" value="X-ray"/>
    <property type="resolution" value="3.00 A"/>
    <property type="chains" value="A/B/C/D=10-1024"/>
</dbReference>
<dbReference type="PDB" id="1JYN">
    <property type="method" value="X-ray"/>
    <property type="resolution" value="1.80 A"/>
    <property type="chains" value="A/B/C/D=10-1024"/>
</dbReference>
<dbReference type="PDB" id="1JYV">
    <property type="method" value="X-ray"/>
    <property type="resolution" value="1.75 A"/>
    <property type="chains" value="A/B/C/D=10-1024"/>
</dbReference>
<dbReference type="PDB" id="1JYW">
    <property type="method" value="X-ray"/>
    <property type="resolution" value="1.55 A"/>
    <property type="chains" value="A/B/C/D=10-1024"/>
</dbReference>
<dbReference type="PDB" id="1JYX">
    <property type="method" value="X-ray"/>
    <property type="resolution" value="1.75 A"/>
    <property type="chains" value="A/B/C/D=10-1024"/>
</dbReference>
<dbReference type="PDB" id="1JZ2">
    <property type="method" value="X-ray"/>
    <property type="resolution" value="2.10 A"/>
    <property type="chains" value="A/B/C/D=2-1024"/>
</dbReference>
<dbReference type="PDB" id="1JZ3">
    <property type="method" value="X-ray"/>
    <property type="resolution" value="1.75 A"/>
    <property type="chains" value="A/B/C/D=10-1024"/>
</dbReference>
<dbReference type="PDB" id="1JZ4">
    <property type="method" value="X-ray"/>
    <property type="resolution" value="2.10 A"/>
    <property type="chains" value="A/B/C/D=10-1024"/>
</dbReference>
<dbReference type="PDB" id="1JZ5">
    <property type="method" value="X-ray"/>
    <property type="resolution" value="1.80 A"/>
    <property type="chains" value="A/B/C/D=10-1024"/>
</dbReference>
<dbReference type="PDB" id="1JZ6">
    <property type="method" value="X-ray"/>
    <property type="resolution" value="2.10 A"/>
    <property type="chains" value="A/B/C/D=10-1024"/>
</dbReference>
<dbReference type="PDB" id="1JZ7">
    <property type="method" value="X-ray"/>
    <property type="resolution" value="1.50 A"/>
    <property type="chains" value="A/B/C/D=10-1024"/>
</dbReference>
<dbReference type="PDB" id="1JZ8">
    <property type="method" value="X-ray"/>
    <property type="resolution" value="1.50 A"/>
    <property type="chains" value="A/B/C/D=10-1024"/>
</dbReference>
<dbReference type="PDB" id="1PX3">
    <property type="method" value="X-ray"/>
    <property type="resolution" value="1.60 A"/>
    <property type="chains" value="A/B/C/D=10-1024"/>
</dbReference>
<dbReference type="PDB" id="1PX4">
    <property type="method" value="X-ray"/>
    <property type="resolution" value="1.60 A"/>
    <property type="chains" value="A/B/C/D=10-1024"/>
</dbReference>
<dbReference type="PDB" id="3CZJ">
    <property type="method" value="X-ray"/>
    <property type="resolution" value="2.05 A"/>
    <property type="chains" value="A/B/C/D=10-1024"/>
</dbReference>
<dbReference type="PDB" id="3DYM">
    <property type="method" value="X-ray"/>
    <property type="resolution" value="2.05 A"/>
    <property type="chains" value="A/B/C/D=10-1024"/>
</dbReference>
<dbReference type="PDB" id="3DYO">
    <property type="method" value="X-ray"/>
    <property type="resolution" value="1.80 A"/>
    <property type="chains" value="A/B/C/D=10-1024"/>
</dbReference>
<dbReference type="PDB" id="3DYP">
    <property type="method" value="X-ray"/>
    <property type="resolution" value="1.75 A"/>
    <property type="chains" value="A/B/C/D=10-1024"/>
</dbReference>
<dbReference type="PDB" id="3E1F">
    <property type="method" value="X-ray"/>
    <property type="resolution" value="3.00 A"/>
    <property type="chains" value="1/2/3/4=10-1024"/>
</dbReference>
<dbReference type="PDB" id="3I3B">
    <property type="method" value="X-ray"/>
    <property type="resolution" value="2.20 A"/>
    <property type="chains" value="A/B/C/D=10-1024"/>
</dbReference>
<dbReference type="PDB" id="3I3D">
    <property type="method" value="X-ray"/>
    <property type="resolution" value="2.20 A"/>
    <property type="chains" value="A/B/C/D=10-1024"/>
</dbReference>
<dbReference type="PDB" id="3I3E">
    <property type="method" value="X-ray"/>
    <property type="resolution" value="2.10 A"/>
    <property type="chains" value="A/B/C/D=10-1024"/>
</dbReference>
<dbReference type="PDB" id="3IAP">
    <property type="method" value="X-ray"/>
    <property type="resolution" value="2.00 A"/>
    <property type="chains" value="A/B/C/D=10-1024"/>
</dbReference>
<dbReference type="PDB" id="3IAQ">
    <property type="method" value="X-ray"/>
    <property type="resolution" value="2.70 A"/>
    <property type="chains" value="A/B/C/D=10-1024"/>
</dbReference>
<dbReference type="PDB" id="3J7H">
    <property type="method" value="EM"/>
    <property type="resolution" value="3.20 A"/>
    <property type="chains" value="A/B/C/D=1-1024"/>
</dbReference>
<dbReference type="PDB" id="3MUY">
    <property type="method" value="X-ray"/>
    <property type="resolution" value="2.50 A"/>
    <property type="chains" value="1/2/3/4=10-1024"/>
</dbReference>
<dbReference type="PDB" id="3MUZ">
    <property type="method" value="X-ray"/>
    <property type="resolution" value="1.90 A"/>
    <property type="chains" value="1/2/3/4=10-1024"/>
</dbReference>
<dbReference type="PDB" id="3MV0">
    <property type="method" value="X-ray"/>
    <property type="resolution" value="2.20 A"/>
    <property type="chains" value="1/2/3/4=10-1024"/>
</dbReference>
<dbReference type="PDB" id="3MV1">
    <property type="method" value="X-ray"/>
    <property type="resolution" value="2.20 A"/>
    <property type="chains" value="1/2/3/4=10-1024"/>
</dbReference>
<dbReference type="PDB" id="3SEP">
    <property type="method" value="X-ray"/>
    <property type="resolution" value="2.05 A"/>
    <property type="chains" value="A/B/C/D=10-1024"/>
</dbReference>
<dbReference type="PDB" id="3T08">
    <property type="method" value="X-ray"/>
    <property type="resolution" value="2.00 A"/>
    <property type="chains" value="A/B/C/D=10-1024"/>
</dbReference>
<dbReference type="PDB" id="3T09">
    <property type="method" value="X-ray"/>
    <property type="resolution" value="1.75 A"/>
    <property type="chains" value="A/B/C/D=10-1024"/>
</dbReference>
<dbReference type="PDB" id="3T0A">
    <property type="method" value="X-ray"/>
    <property type="resolution" value="1.90 A"/>
    <property type="chains" value="A/B/C/D=10-1024"/>
</dbReference>
<dbReference type="PDB" id="3T0B">
    <property type="method" value="X-ray"/>
    <property type="resolution" value="2.40 A"/>
    <property type="chains" value="A/B/C/D=10-1024"/>
</dbReference>
<dbReference type="PDB" id="3T0D">
    <property type="method" value="X-ray"/>
    <property type="resolution" value="1.93 A"/>
    <property type="chains" value="A/B/C/D=10-1024"/>
</dbReference>
<dbReference type="PDB" id="3T2O">
    <property type="method" value="X-ray"/>
    <property type="resolution" value="1.85 A"/>
    <property type="chains" value="A/B/C/D=10-1024"/>
</dbReference>
<dbReference type="PDB" id="3T2P">
    <property type="method" value="X-ray"/>
    <property type="resolution" value="2.60 A"/>
    <property type="chains" value="A/B/C/D=10-1024"/>
</dbReference>
<dbReference type="PDB" id="3T2Q">
    <property type="method" value="X-ray"/>
    <property type="resolution" value="2.40 A"/>
    <property type="chains" value="A/B/C/D=10-1024"/>
</dbReference>
<dbReference type="PDB" id="3VD3">
    <property type="method" value="X-ray"/>
    <property type="resolution" value="2.80 A"/>
    <property type="chains" value="A/B/C/D=10-1024"/>
</dbReference>
<dbReference type="PDB" id="3VD4">
    <property type="method" value="X-ray"/>
    <property type="resolution" value="2.00 A"/>
    <property type="chains" value="A/B/C/D=10-1024"/>
</dbReference>
<dbReference type="PDB" id="3VD5">
    <property type="method" value="X-ray"/>
    <property type="resolution" value="2.70 A"/>
    <property type="chains" value="A/B/C/D=10-1024"/>
</dbReference>
<dbReference type="PDB" id="3VD7">
    <property type="method" value="X-ray"/>
    <property type="resolution" value="2.87 A"/>
    <property type="chains" value="A/B/C/D=10-1024"/>
</dbReference>
<dbReference type="PDB" id="3VD9">
    <property type="method" value="X-ray"/>
    <property type="resolution" value="2.05 A"/>
    <property type="chains" value="A/B/C/D=10-1024"/>
</dbReference>
<dbReference type="PDB" id="3VDA">
    <property type="method" value="X-ray"/>
    <property type="resolution" value="2.50 A"/>
    <property type="chains" value="A/B/C/D=10-1024"/>
</dbReference>
<dbReference type="PDB" id="3VDB">
    <property type="method" value="X-ray"/>
    <property type="resolution" value="2.05 A"/>
    <property type="chains" value="A/B/C/D=10-1024"/>
</dbReference>
<dbReference type="PDB" id="3VDC">
    <property type="method" value="X-ray"/>
    <property type="resolution" value="2.55 A"/>
    <property type="chains" value="A/B/C/D=10-1024"/>
</dbReference>
<dbReference type="PDB" id="4CKD">
    <property type="method" value="EM"/>
    <property type="resolution" value="13.00 A"/>
    <property type="chains" value="A/B/C/D=1-1024"/>
</dbReference>
<dbReference type="PDB" id="4DUV">
    <property type="method" value="X-ray"/>
    <property type="resolution" value="2.10 A"/>
    <property type="chains" value="A/B/C/D=10-1024"/>
</dbReference>
<dbReference type="PDB" id="4DUW">
    <property type="method" value="X-ray"/>
    <property type="resolution" value="2.20 A"/>
    <property type="chains" value="A/B/C/D=10-1024"/>
</dbReference>
<dbReference type="PDB" id="4DUX">
    <property type="method" value="X-ray"/>
    <property type="resolution" value="2.30 A"/>
    <property type="chains" value="A/B/C/D=10-1024"/>
</dbReference>
<dbReference type="PDB" id="4TTG">
    <property type="method" value="X-ray"/>
    <property type="resolution" value="1.60 A"/>
    <property type="chains" value="A/B/C/D=15-1024"/>
</dbReference>
<dbReference type="PDB" id="4V40">
    <property type="method" value="X-ray"/>
    <property type="resolution" value="2.50 A"/>
    <property type="chains" value="A/B/C/D/E/F/G/H/I/J/K/L/M/N/O/P=2-1024"/>
</dbReference>
<dbReference type="PDB" id="4V41">
    <property type="method" value="X-ray"/>
    <property type="resolution" value="2.50 A"/>
    <property type="chains" value="A/B/C/D/E/F/G/H/I/J/K/L/M/N/O/P=2-1024"/>
</dbReference>
<dbReference type="PDB" id="4V44">
    <property type="method" value="X-ray"/>
    <property type="resolution" value="2.70 A"/>
    <property type="chains" value="A/B/C/D/E/F/G/H/I/J/K/L/M/N/O/P=2-1024"/>
</dbReference>
<dbReference type="PDB" id="4V45">
    <property type="method" value="X-ray"/>
    <property type="resolution" value="2.60 A"/>
    <property type="chains" value="A/B/C/D/E/F/G/H/I/J/K/L/M/N/O/P=2-1024"/>
</dbReference>
<dbReference type="PDB" id="5A1A">
    <property type="method" value="EM"/>
    <property type="resolution" value="2.20 A"/>
    <property type="chains" value="A/B/C/D=3-1024"/>
</dbReference>
<dbReference type="PDB" id="6CVM">
    <property type="method" value="EM"/>
    <property type="resolution" value="1.90 A"/>
    <property type="chains" value="A/B/C/D=3-1023"/>
</dbReference>
<dbReference type="PDB" id="6DRV">
    <property type="method" value="EM"/>
    <property type="resolution" value="2.20 A"/>
    <property type="chains" value="A/B/C/D=1-1024"/>
</dbReference>
<dbReference type="PDB" id="6KUZ">
    <property type="method" value="X-ray"/>
    <property type="resolution" value="2.83 A"/>
    <property type="chains" value="A/B/C/D=1-1024"/>
</dbReference>
<dbReference type="PDB" id="6TSH">
    <property type="method" value="EM"/>
    <property type="resolution" value="2.30 A"/>
    <property type="chains" value="A/B/C/D=10-1024"/>
</dbReference>
<dbReference type="PDB" id="6TSK">
    <property type="method" value="EM"/>
    <property type="resolution" value="2.30 A"/>
    <property type="chains" value="A/B/C/D=10-1024"/>
</dbReference>
<dbReference type="PDB" id="6TTE">
    <property type="method" value="EM"/>
    <property type="resolution" value="2.20 A"/>
    <property type="chains" value="A/B/C/D=10-1024"/>
</dbReference>
<dbReference type="PDB" id="6X1Q">
    <property type="method" value="EM"/>
    <property type="resolution" value="1.80 A"/>
    <property type="chains" value="A/B/C/D=3-1023"/>
</dbReference>
<dbReference type="PDB" id="7BRS">
    <property type="method" value="X-ray"/>
    <property type="resolution" value="2.67 A"/>
    <property type="chains" value="A/B/C/D=1-1024"/>
</dbReference>
<dbReference type="PDB" id="7BTK">
    <property type="method" value="X-ray"/>
    <property type="resolution" value="2.70 A"/>
    <property type="chains" value="A/B/C/D=1-1024"/>
</dbReference>
<dbReference type="PDB" id="8BK7">
    <property type="method" value="EM"/>
    <property type="resolution" value="3.30 A"/>
    <property type="chains" value="A/B/C/D=1-1024"/>
</dbReference>
<dbReference type="PDB" id="8BK8">
    <property type="method" value="EM"/>
    <property type="resolution" value="2.90 A"/>
    <property type="chains" value="A/B/C/D=1-1024"/>
</dbReference>
<dbReference type="PDB" id="8BKG">
    <property type="method" value="EM"/>
    <property type="resolution" value="3.20 A"/>
    <property type="chains" value="A/B/C/D=1-1024"/>
</dbReference>
<dbReference type="PDB" id="8Q7Y">
    <property type="method" value="EM"/>
    <property type="resolution" value="2.60 A"/>
    <property type="chains" value="A/B/C/D=1-1024"/>
</dbReference>
<dbReference type="PDB" id="8RI6">
    <property type="method" value="EM"/>
    <property type="resolution" value="2.06 A"/>
    <property type="chains" value="A/B/C/D=1-1024"/>
</dbReference>
<dbReference type="PDB" id="8RI7">
    <property type="method" value="EM"/>
    <property type="resolution" value="1.93 A"/>
    <property type="chains" value="A/B/C/D=1-1024"/>
</dbReference>
<dbReference type="PDB" id="8RI8">
    <property type="method" value="EM"/>
    <property type="resolution" value="1.42 A"/>
    <property type="chains" value="A/B/C/D=1-1024"/>
</dbReference>
<dbReference type="PDB" id="8VT0">
    <property type="method" value="EM"/>
    <property type="resolution" value="3.58 A"/>
    <property type="chains" value="A/B/C/D=3-1024"/>
</dbReference>
<dbReference type="PDBsum" id="1DP0"/>
<dbReference type="PDBsum" id="1F4A"/>
<dbReference type="PDBsum" id="1F4H"/>
<dbReference type="PDBsum" id="1HN1"/>
<dbReference type="PDBsum" id="1JYN"/>
<dbReference type="PDBsum" id="1JYV"/>
<dbReference type="PDBsum" id="1JYW"/>
<dbReference type="PDBsum" id="1JYX"/>
<dbReference type="PDBsum" id="1JZ2"/>
<dbReference type="PDBsum" id="1JZ3"/>
<dbReference type="PDBsum" id="1JZ4"/>
<dbReference type="PDBsum" id="1JZ5"/>
<dbReference type="PDBsum" id="1JZ6"/>
<dbReference type="PDBsum" id="1JZ7"/>
<dbReference type="PDBsum" id="1JZ8"/>
<dbReference type="PDBsum" id="1PX3"/>
<dbReference type="PDBsum" id="1PX4"/>
<dbReference type="PDBsum" id="3CZJ"/>
<dbReference type="PDBsum" id="3DYM"/>
<dbReference type="PDBsum" id="3DYO"/>
<dbReference type="PDBsum" id="3DYP"/>
<dbReference type="PDBsum" id="3E1F"/>
<dbReference type="PDBsum" id="3I3B"/>
<dbReference type="PDBsum" id="3I3D"/>
<dbReference type="PDBsum" id="3I3E"/>
<dbReference type="PDBsum" id="3IAP"/>
<dbReference type="PDBsum" id="3IAQ"/>
<dbReference type="PDBsum" id="3J7H"/>
<dbReference type="PDBsum" id="3MUY"/>
<dbReference type="PDBsum" id="3MUZ"/>
<dbReference type="PDBsum" id="3MV0"/>
<dbReference type="PDBsum" id="3MV1"/>
<dbReference type="PDBsum" id="3SEP"/>
<dbReference type="PDBsum" id="3T08"/>
<dbReference type="PDBsum" id="3T09"/>
<dbReference type="PDBsum" id="3T0A"/>
<dbReference type="PDBsum" id="3T0B"/>
<dbReference type="PDBsum" id="3T0D"/>
<dbReference type="PDBsum" id="3T2O"/>
<dbReference type="PDBsum" id="3T2P"/>
<dbReference type="PDBsum" id="3T2Q"/>
<dbReference type="PDBsum" id="3VD3"/>
<dbReference type="PDBsum" id="3VD4"/>
<dbReference type="PDBsum" id="3VD5"/>
<dbReference type="PDBsum" id="3VD7"/>
<dbReference type="PDBsum" id="3VD9"/>
<dbReference type="PDBsum" id="3VDA"/>
<dbReference type="PDBsum" id="3VDB"/>
<dbReference type="PDBsum" id="3VDC"/>
<dbReference type="PDBsum" id="4CKD"/>
<dbReference type="PDBsum" id="4DUV"/>
<dbReference type="PDBsum" id="4DUW"/>
<dbReference type="PDBsum" id="4DUX"/>
<dbReference type="PDBsum" id="4TTG"/>
<dbReference type="PDBsum" id="4V40"/>
<dbReference type="PDBsum" id="4V41"/>
<dbReference type="PDBsum" id="4V44"/>
<dbReference type="PDBsum" id="4V45"/>
<dbReference type="PDBsum" id="5A1A"/>
<dbReference type="PDBsum" id="6CVM"/>
<dbReference type="PDBsum" id="6DRV"/>
<dbReference type="PDBsum" id="6KUZ"/>
<dbReference type="PDBsum" id="6TSH"/>
<dbReference type="PDBsum" id="6TSK"/>
<dbReference type="PDBsum" id="6TTE"/>
<dbReference type="PDBsum" id="6X1Q"/>
<dbReference type="PDBsum" id="7BRS"/>
<dbReference type="PDBsum" id="7BTK"/>
<dbReference type="PDBsum" id="8BK7"/>
<dbReference type="PDBsum" id="8BK8"/>
<dbReference type="PDBsum" id="8BKG"/>
<dbReference type="PDBsum" id="8Q7Y"/>
<dbReference type="PDBsum" id="8RI6"/>
<dbReference type="PDBsum" id="8RI7"/>
<dbReference type="PDBsum" id="8RI8"/>
<dbReference type="PDBsum" id="8VT0"/>
<dbReference type="EMDB" id="EMD-16091"/>
<dbReference type="EMDB" id="EMD-16092"/>
<dbReference type="EMDB" id="EMD-16097"/>
<dbReference type="EMDB" id="EMD-18244"/>
<dbReference type="EMDB" id="EMD-19181"/>
<dbReference type="EMDB" id="EMD-19182"/>
<dbReference type="EMDB" id="EMD-19183"/>
<dbReference type="EMDB" id="EMD-21995"/>
<dbReference type="EMDB" id="EMD-2548"/>
<dbReference type="EMDB" id="EMD-2824"/>
<dbReference type="EMDB" id="EMD-2984"/>
<dbReference type="EMDB" id="EMD-31313"/>
<dbReference type="EMDB" id="EMD-51069"/>
<dbReference type="EMDB" id="EMD-51071"/>
<dbReference type="EMDB" id="EMD-51072"/>
<dbReference type="EMDB" id="EMD-5995"/>
<dbReference type="EMDB" id="EMD-7770"/>
<dbReference type="EMDB" id="EMD-8908"/>
<dbReference type="PCDDB" id="P00722"/>
<dbReference type="SMR" id="P00722"/>
<dbReference type="BioGRID" id="4263186">
    <property type="interactions" value="82"/>
</dbReference>
<dbReference type="BioGRID" id="849400">
    <property type="interactions" value="1"/>
</dbReference>
<dbReference type="DIP" id="DIP-10081N"/>
<dbReference type="FunCoup" id="P00722">
    <property type="interactions" value="490"/>
</dbReference>
<dbReference type="IntAct" id="P00722">
    <property type="interactions" value="76"/>
</dbReference>
<dbReference type="STRING" id="511145.b0344"/>
<dbReference type="BindingDB" id="P00722"/>
<dbReference type="ChEMBL" id="CHEMBL4603"/>
<dbReference type="DrugBank" id="DB02294">
    <property type="generic name" value="(5R,6S,7S,8S)-5-hydroxymethyl-6,7,8-trihydroxy-tetrazolo[1,5-A]piperidine"/>
</dbReference>
<dbReference type="DrugBank" id="DB01920">
    <property type="generic name" value="1-O-[O-Nitrophenyl]-Beta-D-Galactopyranose"/>
</dbReference>
<dbReference type="DrugBank" id="DB02228">
    <property type="generic name" value="2-deoxy-2-fluoro-Beta-D-galactose"/>
</dbReference>
<dbReference type="DrugBank" id="DB04382">
    <property type="generic name" value="2-Deoxy-alpha-D-galactopyranose"/>
</dbReference>
<dbReference type="DrugBank" id="DB04155">
    <property type="generic name" value="2-Fluoro-2-Deoxy-Beta-D-Galactopyranosyl-Beta-D-Glucopyranose"/>
</dbReference>
<dbReference type="DrugBank" id="DB02632">
    <property type="generic name" value="4-nitrophenyl-beta-D-galactoside"/>
</dbReference>
<dbReference type="DrugBank" id="DB04116">
    <property type="generic name" value="Allolactose"/>
</dbReference>
<dbReference type="DrugBank" id="DB01885">
    <property type="generic name" value="D-Galctopyranosyl-1-On"/>
</dbReference>
<dbReference type="DrugBank" id="DB01862">
    <property type="generic name" value="Isopropyl beta-D-thiogalactopyranoside"/>
</dbReference>
<dbReference type="DrugBank" id="DB04465">
    <property type="generic name" value="Lactose"/>
</dbReference>
<dbReference type="DrugBank" id="DB04530">
    <property type="generic name" value="S,S-(2-Hydroxyethyl)Thiocysteine"/>
</dbReference>
<dbReference type="DrugBank" id="DB13503">
    <property type="generic name" value="Tyrothricin"/>
</dbReference>
<dbReference type="CAZy" id="GH2">
    <property type="family name" value="Glycoside Hydrolase Family 2"/>
</dbReference>
<dbReference type="PaxDb" id="511145-b0344"/>
<dbReference type="ABCD" id="P00722">
    <property type="antibodies" value="6 sequenced antibodies"/>
</dbReference>
<dbReference type="EnsemblBacteria" id="AAC73447">
    <property type="protein sequence ID" value="AAC73447"/>
    <property type="gene ID" value="b0344"/>
</dbReference>
<dbReference type="GeneID" id="945006"/>
<dbReference type="KEGG" id="ecj:JW0335"/>
<dbReference type="KEGG" id="eco:b0344"/>
<dbReference type="EchoBASE" id="EB0522"/>
<dbReference type="eggNOG" id="COG3250">
    <property type="taxonomic scope" value="Bacteria"/>
</dbReference>
<dbReference type="HOGENOM" id="CLU_002346_0_2_6"/>
<dbReference type="InParanoid" id="P00722"/>
<dbReference type="OMA" id="WASAMLD"/>
<dbReference type="OrthoDB" id="9758603at2"/>
<dbReference type="PhylomeDB" id="P00722"/>
<dbReference type="BioCyc" id="EcoCyc:BETAGALACTOSID-MONOMER"/>
<dbReference type="BioCyc" id="MetaCyc:BETAGALACTOSID-MONOMER"/>
<dbReference type="BRENDA" id="3.2.1.23">
    <property type="organism ID" value="2026"/>
</dbReference>
<dbReference type="SABIO-RK" id="P00722"/>
<dbReference type="EvolutionaryTrace" id="P00722"/>
<dbReference type="PHI-base" id="PHI:6268"/>
<dbReference type="PHI-base" id="PHI:9897"/>
<dbReference type="PRO" id="PR:P00722"/>
<dbReference type="Proteomes" id="UP000000625">
    <property type="component" value="Chromosome"/>
</dbReference>
<dbReference type="GO" id="GO:0009341">
    <property type="term" value="C:beta-galactosidase complex"/>
    <property type="evidence" value="ECO:0000314"/>
    <property type="project" value="EcoCyc"/>
</dbReference>
<dbReference type="GO" id="GO:0031420">
    <property type="term" value="F:alkali metal ion binding"/>
    <property type="evidence" value="ECO:0000314"/>
    <property type="project" value="EcoCyc"/>
</dbReference>
<dbReference type="GO" id="GO:0004565">
    <property type="term" value="F:beta-galactosidase activity"/>
    <property type="evidence" value="ECO:0000314"/>
    <property type="project" value="EcoCyc"/>
</dbReference>
<dbReference type="GO" id="GO:0030246">
    <property type="term" value="F:carbohydrate binding"/>
    <property type="evidence" value="ECO:0007669"/>
    <property type="project" value="InterPro"/>
</dbReference>
<dbReference type="GO" id="GO:0042802">
    <property type="term" value="F:identical protein binding"/>
    <property type="evidence" value="ECO:0000353"/>
    <property type="project" value="IntAct"/>
</dbReference>
<dbReference type="GO" id="GO:0000287">
    <property type="term" value="F:magnesium ion binding"/>
    <property type="evidence" value="ECO:0000314"/>
    <property type="project" value="EcoCyc"/>
</dbReference>
<dbReference type="GO" id="GO:0005990">
    <property type="term" value="P:lactose catabolic process"/>
    <property type="evidence" value="ECO:0000315"/>
    <property type="project" value="CACAO"/>
</dbReference>
<dbReference type="FunFam" id="2.60.120.260:FF:000058">
    <property type="entry name" value="Beta-galactosidase"/>
    <property type="match status" value="1"/>
</dbReference>
<dbReference type="FunFam" id="2.60.40.10:FF:000680">
    <property type="entry name" value="Beta-galactosidase"/>
    <property type="match status" value="1"/>
</dbReference>
<dbReference type="FunFam" id="2.60.40.10:FF:000850">
    <property type="entry name" value="Beta-galactosidase"/>
    <property type="match status" value="1"/>
</dbReference>
<dbReference type="FunFam" id="2.70.98.10:FF:000006">
    <property type="entry name" value="Beta-galactosidase"/>
    <property type="match status" value="1"/>
</dbReference>
<dbReference type="FunFam" id="3.20.20.80:FF:000018">
    <property type="entry name" value="Beta-galactosidase"/>
    <property type="match status" value="1"/>
</dbReference>
<dbReference type="Gene3D" id="2.70.98.10">
    <property type="match status" value="1"/>
</dbReference>
<dbReference type="Gene3D" id="2.60.120.260">
    <property type="entry name" value="Galactose-binding domain-like"/>
    <property type="match status" value="1"/>
</dbReference>
<dbReference type="Gene3D" id="3.20.20.80">
    <property type="entry name" value="Glycosidases"/>
    <property type="match status" value="1"/>
</dbReference>
<dbReference type="Gene3D" id="2.60.40.10">
    <property type="entry name" value="Immunoglobulins"/>
    <property type="match status" value="2"/>
</dbReference>
<dbReference type="HAMAP" id="MF_01687">
    <property type="entry name" value="Beta_gal"/>
    <property type="match status" value="1"/>
</dbReference>
<dbReference type="InterPro" id="IPR004199">
    <property type="entry name" value="B-gal_small/dom_5"/>
</dbReference>
<dbReference type="InterPro" id="IPR050347">
    <property type="entry name" value="Bact_Beta-galactosidase"/>
</dbReference>
<dbReference type="InterPro" id="IPR036156">
    <property type="entry name" value="Beta-gal/glucu_dom_sf"/>
</dbReference>
<dbReference type="InterPro" id="IPR011013">
    <property type="entry name" value="Gal_mutarotase_sf_dom"/>
</dbReference>
<dbReference type="InterPro" id="IPR008979">
    <property type="entry name" value="Galactose-bd-like_sf"/>
</dbReference>
<dbReference type="InterPro" id="IPR014718">
    <property type="entry name" value="GH-type_carb-bd"/>
</dbReference>
<dbReference type="InterPro" id="IPR006101">
    <property type="entry name" value="Glyco_hydro_2"/>
</dbReference>
<dbReference type="InterPro" id="IPR023232">
    <property type="entry name" value="Glyco_hydro_2_AS"/>
</dbReference>
<dbReference type="InterPro" id="IPR023933">
    <property type="entry name" value="Glyco_hydro_2_beta_Galsidase"/>
</dbReference>
<dbReference type="InterPro" id="IPR006103">
    <property type="entry name" value="Glyco_hydro_2_cat"/>
</dbReference>
<dbReference type="InterPro" id="IPR023230">
    <property type="entry name" value="Glyco_hydro_2_CS"/>
</dbReference>
<dbReference type="InterPro" id="IPR006102">
    <property type="entry name" value="Glyco_hydro_2_Ig-like"/>
</dbReference>
<dbReference type="InterPro" id="IPR006104">
    <property type="entry name" value="Glyco_hydro_2_N"/>
</dbReference>
<dbReference type="InterPro" id="IPR017853">
    <property type="entry name" value="Glycoside_hydrolase_SF"/>
</dbReference>
<dbReference type="InterPro" id="IPR013783">
    <property type="entry name" value="Ig-like_fold"/>
</dbReference>
<dbReference type="InterPro" id="IPR032312">
    <property type="entry name" value="LacZ_4"/>
</dbReference>
<dbReference type="NCBIfam" id="NF007074">
    <property type="entry name" value="PRK09525.1"/>
    <property type="match status" value="1"/>
</dbReference>
<dbReference type="PANTHER" id="PTHR46323">
    <property type="entry name" value="BETA-GALACTOSIDASE"/>
    <property type="match status" value="1"/>
</dbReference>
<dbReference type="PANTHER" id="PTHR46323:SF2">
    <property type="entry name" value="BETA-GALACTOSIDASE"/>
    <property type="match status" value="1"/>
</dbReference>
<dbReference type="Pfam" id="PF02929">
    <property type="entry name" value="Bgal_small_N"/>
    <property type="match status" value="1"/>
</dbReference>
<dbReference type="Pfam" id="PF00703">
    <property type="entry name" value="Glyco_hydro_2"/>
    <property type="match status" value="1"/>
</dbReference>
<dbReference type="Pfam" id="PF02836">
    <property type="entry name" value="Glyco_hydro_2_C"/>
    <property type="match status" value="1"/>
</dbReference>
<dbReference type="Pfam" id="PF02837">
    <property type="entry name" value="Glyco_hydro_2_N"/>
    <property type="match status" value="1"/>
</dbReference>
<dbReference type="Pfam" id="PF16353">
    <property type="entry name" value="LacZ_4"/>
    <property type="match status" value="1"/>
</dbReference>
<dbReference type="PRINTS" id="PR00132">
    <property type="entry name" value="GLHYDRLASE2"/>
</dbReference>
<dbReference type="SMART" id="SM01038">
    <property type="entry name" value="Bgal_small_N"/>
    <property type="match status" value="1"/>
</dbReference>
<dbReference type="SUPFAM" id="SSF51445">
    <property type="entry name" value="(Trans)glycosidases"/>
    <property type="match status" value="1"/>
</dbReference>
<dbReference type="SUPFAM" id="SSF49303">
    <property type="entry name" value="beta-Galactosidase/glucuronidase domain"/>
    <property type="match status" value="2"/>
</dbReference>
<dbReference type="SUPFAM" id="SSF74650">
    <property type="entry name" value="Galactose mutarotase-like"/>
    <property type="match status" value="1"/>
</dbReference>
<dbReference type="SUPFAM" id="SSF49785">
    <property type="entry name" value="Galactose-binding domain-like"/>
    <property type="match status" value="1"/>
</dbReference>
<dbReference type="PROSITE" id="PS00719">
    <property type="entry name" value="GLYCOSYL_HYDROL_F2_1"/>
    <property type="match status" value="1"/>
</dbReference>
<dbReference type="PROSITE" id="PS00608">
    <property type="entry name" value="GLYCOSYL_HYDROL_F2_2"/>
    <property type="match status" value="1"/>
</dbReference>
<evidence type="ECO:0000269" key="1">
    <source>
    </source>
</evidence>
<evidence type="ECO:0000269" key="2">
    <source>
    </source>
</evidence>
<evidence type="ECO:0000269" key="3">
    <source>
    </source>
</evidence>
<evidence type="ECO:0000269" key="4">
    <source>
    </source>
</evidence>
<evidence type="ECO:0000269" key="5">
    <source>
    </source>
</evidence>
<evidence type="ECO:0000269" key="6">
    <source>
    </source>
</evidence>
<evidence type="ECO:0000269" key="7">
    <source>
    </source>
</evidence>
<evidence type="ECO:0000269" key="8">
    <source>
    </source>
</evidence>
<evidence type="ECO:0000269" key="9">
    <source>
    </source>
</evidence>
<evidence type="ECO:0000269" key="10">
    <source>
    </source>
</evidence>
<evidence type="ECO:0000269" key="11">
    <source>
    </source>
</evidence>
<evidence type="ECO:0000269" key="12">
    <source>
    </source>
</evidence>
<evidence type="ECO:0000269" key="13">
    <source>
    </source>
</evidence>
<evidence type="ECO:0000269" key="14">
    <source>
    </source>
</evidence>
<evidence type="ECO:0000269" key="15">
    <source>
    </source>
</evidence>
<evidence type="ECO:0000269" key="16">
    <source>
    </source>
</evidence>
<evidence type="ECO:0000305" key="17"/>
<evidence type="ECO:0007829" key="18">
    <source>
        <dbReference type="PDB" id="1F4H"/>
    </source>
</evidence>
<evidence type="ECO:0007829" key="19">
    <source>
        <dbReference type="PDB" id="1JYW"/>
    </source>
</evidence>
<evidence type="ECO:0007829" key="20">
    <source>
        <dbReference type="PDB" id="1JZ6"/>
    </source>
</evidence>
<evidence type="ECO:0007829" key="21">
    <source>
        <dbReference type="PDB" id="1JZ7"/>
    </source>
</evidence>
<evidence type="ECO:0007829" key="22">
    <source>
        <dbReference type="PDB" id="1JZ8"/>
    </source>
</evidence>
<evidence type="ECO:0007829" key="23">
    <source>
        <dbReference type="PDB" id="1PX4"/>
    </source>
</evidence>
<evidence type="ECO:0007829" key="24">
    <source>
        <dbReference type="PDB" id="3IAQ"/>
    </source>
</evidence>
<evidence type="ECO:0007829" key="25">
    <source>
        <dbReference type="PDB" id="3J7H"/>
    </source>
</evidence>
<evidence type="ECO:0007829" key="26">
    <source>
        <dbReference type="PDB" id="3MUZ"/>
    </source>
</evidence>
<evidence type="ECO:0007829" key="27">
    <source>
        <dbReference type="PDB" id="3T09"/>
    </source>
</evidence>
<evidence type="ECO:0007829" key="28">
    <source>
        <dbReference type="PDB" id="5A1A"/>
    </source>
</evidence>
<evidence type="ECO:0007829" key="29">
    <source>
        <dbReference type="PDB" id="6CVM"/>
    </source>
</evidence>
<evidence type="ECO:0007829" key="30">
    <source>
        <dbReference type="PDB" id="6X1Q"/>
    </source>
</evidence>
<evidence type="ECO:0007829" key="31">
    <source>
        <dbReference type="PDB" id="7BRS"/>
    </source>
</evidence>
<evidence type="ECO:0007829" key="32">
    <source>
        <dbReference type="PDB" id="8BK8"/>
    </source>
</evidence>
<evidence type="ECO:0007829" key="33">
    <source>
        <dbReference type="PDB" id="8BKG"/>
    </source>
</evidence>
<evidence type="ECO:0007829" key="34">
    <source>
        <dbReference type="PDB" id="8Q7Y"/>
    </source>
</evidence>
<protein>
    <recommendedName>
        <fullName>Beta-galactosidase</fullName>
        <shortName>Beta-gal</shortName>
        <ecNumber>3.2.1.23</ecNumber>
    </recommendedName>
    <alternativeName>
        <fullName>Lactase</fullName>
    </alternativeName>
</protein>
<sequence length="1024" mass="116483">MTMITDSLAVVLQRRDWENPGVTQLNRLAAHPPFASWRNSEEARTDRPSQQLRSLNGEWRFAWFPAPEAVPESWLECDLPEADTVVVPSNWQMHGYDAPIYTNVTYPITVNPPFVPTENPTGCYSLTFNVDESWLQEGQTRIIFDGVNSAFHLWCNGRWVGYGQDSRLPSEFDLSAFLRAGENRLAVMVLRWSDGSYLEDQDMWRMSGIFRDVSLLHKPTTQISDFHVATRFNDDFSRAVLEAEVQMCGELRDYLRVTVSLWQGETQVASGTAPFGGEIIDERGGYADRVTLRLNVENPKLWSAEIPNLYRAVVELHTADGTLIEAEACDVGFREVRIENGLLLLNGKPLLIRGVNRHEHHPLHGQVMDEQTMVQDILLMKQNNFNAVRCSHYPNHPLWYTLCDRYGLYVVDEANIETHGMVPMNRLTDDPRWLPAMSERVTRMVQRDRNHPSVIIWSLGNESGHGANHDALYRWIKSVDPSRPVQYEGGGADTTATDIICPMYARVDEDQPFPAVPKWSIKKWLSLPGETRPLILCEYAHAMGNSLGGFAKYWQAFRQYPRLQGGFVWDWVDQSLIKYDENGNPWSAYGGDFGDTPNDRQFCMNGLVFADRTPHPALTEAKHQQQFFQFRLSGQTIEVTSEYLFRHSDNELLHWMVALDGKPLASGEVPLDVAPQGKQLIELPELPQPESAGQLWLTVRVVQPNATAWSEAGHISAWQQWRLAENLSVTLPAASHAIPHLTTSEMDFCIELGNKRWQFNRQSGFLSQMWIGDKKQLLTPLRDQFTRAPLDNDIGVSEATRIDPNAWVERWKAAGHYQAEAALLQCTADTLADAVLITTAHAWQHQGKTLFISRKTYRIDGSGQMAITVDVEVASDTPHPARIGLNCQLAQVAERVNWLGLGPQENYPDRLTAACFDRWDLPLSDMYTPYVFPSENGLRCGTRELNYGPHQWRGDFQFNISRYSQQQLMETSHRHLLHAEEGTWLNIDGFHMGIGGDDSWSPSVSAEFQLSAGRYHYQLVWCQK</sequence>
<organism>
    <name type="scientific">Escherichia coli (strain K12)</name>
    <dbReference type="NCBI Taxonomy" id="83333"/>
    <lineage>
        <taxon>Bacteria</taxon>
        <taxon>Pseudomonadati</taxon>
        <taxon>Pseudomonadota</taxon>
        <taxon>Gammaproteobacteria</taxon>
        <taxon>Enterobacterales</taxon>
        <taxon>Enterobacteriaceae</taxon>
        <taxon>Escherichia</taxon>
    </lineage>
</organism>
<feature type="initiator methionine" description="Removed" evidence="16">
    <location>
        <position position="1"/>
    </location>
</feature>
<feature type="chain" id="PRO_0000057650" description="Beta-galactosidase">
    <location>
        <begin position="2"/>
        <end position="1024"/>
    </location>
</feature>
<feature type="active site" description="Proton donor" evidence="11">
    <location>
        <position position="462"/>
    </location>
</feature>
<feature type="active site" description="Nucleophile" evidence="6">
    <location>
        <position position="538"/>
    </location>
</feature>
<feature type="binding site">
    <location>
        <position position="103"/>
    </location>
    <ligand>
        <name>substrate</name>
    </ligand>
</feature>
<feature type="binding site">
    <location>
        <position position="202"/>
    </location>
    <ligand>
        <name>Na(+)</name>
        <dbReference type="ChEBI" id="CHEBI:29101"/>
    </ligand>
</feature>
<feature type="binding site">
    <location>
        <position position="202"/>
    </location>
    <ligand>
        <name>substrate</name>
    </ligand>
</feature>
<feature type="binding site" evidence="1">
    <location>
        <position position="417"/>
    </location>
    <ligand>
        <name>Mg(2+)</name>
        <dbReference type="ChEBI" id="CHEBI:18420"/>
        <label>1</label>
    </ligand>
</feature>
<feature type="binding site" evidence="1">
    <location>
        <position position="419"/>
    </location>
    <ligand>
        <name>Mg(2+)</name>
        <dbReference type="ChEBI" id="CHEBI:18420"/>
        <label>1</label>
    </ligand>
</feature>
<feature type="binding site" evidence="1">
    <location>
        <position position="462"/>
    </location>
    <ligand>
        <name>Mg(2+)</name>
        <dbReference type="ChEBI" id="CHEBI:18420"/>
        <label>1</label>
    </ligand>
</feature>
<feature type="binding site">
    <location>
        <position position="462"/>
    </location>
    <ligand>
        <name>substrate</name>
    </ligand>
</feature>
<feature type="binding site">
    <location>
        <begin position="538"/>
        <end position="541"/>
    </location>
    <ligand>
        <name>substrate</name>
    </ligand>
</feature>
<feature type="binding site" evidence="1">
    <location>
        <position position="598"/>
    </location>
    <ligand>
        <name>Mg(2+)</name>
        <dbReference type="ChEBI" id="CHEBI:18420"/>
        <label>2</label>
    </ligand>
</feature>
<feature type="binding site">
    <location>
        <position position="602"/>
    </location>
    <ligand>
        <name>Na(+)</name>
        <dbReference type="ChEBI" id="CHEBI:29101"/>
    </ligand>
</feature>
<feature type="binding site">
    <location>
        <position position="605"/>
    </location>
    <ligand>
        <name>Na(+)</name>
        <dbReference type="ChEBI" id="CHEBI:29101"/>
    </ligand>
</feature>
<feature type="binding site">
    <location>
        <position position="605"/>
    </location>
    <ligand>
        <name>substrate</name>
    </ligand>
</feature>
<feature type="binding site">
    <location>
        <position position="1000"/>
    </location>
    <ligand>
        <name>substrate</name>
    </ligand>
</feature>
<feature type="site" description="Transition state stabilizer">
    <location>
        <position position="358"/>
    </location>
</feature>
<feature type="site" description="Transition state stabilizer">
    <location>
        <position position="392"/>
    </location>
</feature>
<feature type="site" description="Important for ensuring that an appropriate proportion of lactose is converted to allolactose">
    <location>
        <position position="1000"/>
    </location>
</feature>
<feature type="mutagenesis site" description="Causes a significant decrease in binding affinity in the absence of monovalent cations or in the presence of potassium ions, but only a moderate decrease in the presence of sodium ions." evidence="8">
    <original>D</original>
    <variation>E</variation>
    <variation>N</variation>
    <location>
        <position position="202"/>
    </location>
</feature>
<feature type="mutagenesis site" description="Obliterates all binding and catalysis." evidence="8">
    <original>D</original>
    <variation>F</variation>
    <location>
        <position position="202"/>
    </location>
</feature>
<feature type="mutagenesis site" description="Less stable to heat than wild-type. Causes significant destabilizations of the first transition state." evidence="15">
    <original>H</original>
    <variation>D</variation>
    <variation>F</variation>
    <variation>L</variation>
    <variation>N</variation>
    <location>
        <position position="358"/>
    </location>
</feature>
<feature type="mutagenesis site" description="Essentially inactive unless very rapid purification. Causes very large destabilizations of the transition state." evidence="2">
    <original>H</original>
    <variation>E</variation>
    <variation>F</variation>
    <variation>K</variation>
    <location>
        <position position="392"/>
    </location>
</feature>
<feature type="mutagenesis site" description="Slowly inactivates galactosidase activity by reducing the binding of magnesium. It increases binding specificity." evidence="12">
    <original>E</original>
    <variation>H</variation>
    <location>
        <position position="462"/>
    </location>
</feature>
<feature type="mutagenesis site" description="10000-fold decrease in the beta-galactosidase activity." evidence="4">
    <original>E</original>
    <variation>Q</variation>
    <location>
        <position position="538"/>
    </location>
</feature>
<feature type="mutagenesis site" description="Poorly reactive with galactosyl substrates. Less stable to heat than wild-type." evidence="14">
    <original>H</original>
    <variation>E</variation>
    <variation>F</variation>
    <variation>N</variation>
    <location>
        <position position="541"/>
    </location>
</feature>
<feature type="mutagenesis site" description="Decreases the stability of the loop 794-804." evidence="4">
    <original>F</original>
    <variation>A</variation>
    <location>
        <position position="602"/>
    </location>
</feature>
<feature type="mutagenesis site" description="It forces the apoenzyme to adopt the closed rather than the open conformation. Reduces the binding affinity." evidence="7">
    <original>G</original>
    <variation>A</variation>
    <location>
        <position position="795"/>
    </location>
</feature>
<feature type="mutagenesis site" description="The catalytic efficiency is not increased, when the sodium concentration increases." evidence="9">
    <original>E</original>
    <variation>A</variation>
    <variation>L</variation>
    <location>
        <position position="798"/>
    </location>
</feature>
<feature type="mutagenesis site" description="Small increase of the catalytic efficiency, when the sodium concentration increases." evidence="9">
    <original>E</original>
    <variation>D</variation>
    <variation>Q</variation>
    <location>
        <position position="798"/>
    </location>
</feature>
<feature type="mutagenesis site" description="Decreases affinity for substrate." evidence="5">
    <original>W</original>
    <variation>F</variation>
    <variation>G</variation>
    <variation>L</variation>
    <variation>T</variation>
    <location>
        <position position="1000"/>
    </location>
</feature>
<feature type="helix" evidence="30">
    <location>
        <begin position="4"/>
        <end position="6"/>
    </location>
</feature>
<feature type="helix" evidence="27">
    <location>
        <begin position="11"/>
        <end position="14"/>
    </location>
</feature>
<feature type="helix" evidence="21">
    <location>
        <begin position="16"/>
        <end position="18"/>
    </location>
</feature>
<feature type="strand" evidence="21">
    <location>
        <begin position="23"/>
        <end position="26"/>
    </location>
</feature>
<feature type="strand" evidence="21">
    <location>
        <begin position="37"/>
        <end position="39"/>
    </location>
</feature>
<feature type="helix" evidence="21">
    <location>
        <begin position="40"/>
        <end position="45"/>
    </location>
</feature>
<feature type="strand" evidence="21">
    <location>
        <begin position="52"/>
        <end position="54"/>
    </location>
</feature>
<feature type="strand" evidence="21">
    <location>
        <begin position="57"/>
        <end position="66"/>
    </location>
</feature>
<feature type="helix" evidence="21">
    <location>
        <begin position="67"/>
        <end position="69"/>
    </location>
</feature>
<feature type="helix" evidence="21">
    <location>
        <begin position="73"/>
        <end position="76"/>
    </location>
</feature>
<feature type="strand" evidence="21">
    <location>
        <begin position="83"/>
        <end position="88"/>
    </location>
</feature>
<feature type="helix" evidence="21">
    <location>
        <begin position="91"/>
        <end position="94"/>
    </location>
</feature>
<feature type="strand" evidence="34">
    <location>
        <begin position="95"/>
        <end position="97"/>
    </location>
</feature>
<feature type="strand" evidence="21">
    <location>
        <begin position="100"/>
        <end position="105"/>
    </location>
</feature>
<feature type="strand" evidence="21">
    <location>
        <begin position="121"/>
        <end position="130"/>
    </location>
</feature>
<feature type="helix" evidence="21">
    <location>
        <begin position="132"/>
        <end position="136"/>
    </location>
</feature>
<feature type="strand" evidence="21">
    <location>
        <begin position="137"/>
        <end position="145"/>
    </location>
</feature>
<feature type="strand" evidence="21">
    <location>
        <begin position="147"/>
        <end position="155"/>
    </location>
</feature>
<feature type="strand" evidence="21">
    <location>
        <begin position="158"/>
        <end position="164"/>
    </location>
</feature>
<feature type="strand" evidence="32">
    <location>
        <begin position="166"/>
        <end position="168"/>
    </location>
</feature>
<feature type="strand" evidence="21">
    <location>
        <begin position="170"/>
        <end position="173"/>
    </location>
</feature>
<feature type="turn" evidence="21">
    <location>
        <begin position="175"/>
        <end position="177"/>
    </location>
</feature>
<feature type="strand" evidence="21">
    <location>
        <begin position="180"/>
        <end position="191"/>
    </location>
</feature>
<feature type="helix" evidence="21">
    <location>
        <begin position="194"/>
        <end position="198"/>
    </location>
</feature>
<feature type="strand" evidence="21">
    <location>
        <begin position="202"/>
        <end position="205"/>
    </location>
</feature>
<feature type="strand" evidence="21">
    <location>
        <begin position="213"/>
        <end position="218"/>
    </location>
</feature>
<feature type="strand" evidence="21">
    <location>
        <begin position="220"/>
        <end position="232"/>
    </location>
</feature>
<feature type="strand" evidence="21">
    <location>
        <begin position="236"/>
        <end position="249"/>
    </location>
</feature>
<feature type="strand" evidence="21">
    <location>
        <begin position="255"/>
        <end position="263"/>
    </location>
</feature>
<feature type="strand" evidence="21">
    <location>
        <begin position="266"/>
        <end position="275"/>
    </location>
</feature>
<feature type="strand" evidence="26">
    <location>
        <begin position="279"/>
        <end position="281"/>
    </location>
</feature>
<feature type="strand" evidence="21">
    <location>
        <begin position="289"/>
        <end position="298"/>
    </location>
</feature>
<feature type="strand" evidence="21">
    <location>
        <begin position="304"/>
        <end position="307"/>
    </location>
</feature>
<feature type="strand" evidence="21">
    <location>
        <begin position="310"/>
        <end position="318"/>
    </location>
</feature>
<feature type="turn" evidence="24">
    <location>
        <begin position="319"/>
        <end position="321"/>
    </location>
</feature>
<feature type="strand" evidence="21">
    <location>
        <begin position="323"/>
        <end position="331"/>
    </location>
</feature>
<feature type="strand" evidence="21">
    <location>
        <begin position="336"/>
        <end position="339"/>
    </location>
</feature>
<feature type="strand" evidence="21">
    <location>
        <begin position="342"/>
        <end position="345"/>
    </location>
</feature>
<feature type="strand" evidence="21">
    <location>
        <begin position="352"/>
        <end position="356"/>
    </location>
</feature>
<feature type="turn" evidence="21">
    <location>
        <begin position="362"/>
        <end position="364"/>
    </location>
</feature>
<feature type="helix" evidence="21">
    <location>
        <begin position="370"/>
        <end position="382"/>
    </location>
</feature>
<feature type="strand" evidence="21">
    <location>
        <begin position="387"/>
        <end position="389"/>
    </location>
</feature>
<feature type="helix" evidence="21">
    <location>
        <begin position="397"/>
        <end position="406"/>
    </location>
</feature>
<feature type="strand" evidence="21">
    <location>
        <begin position="409"/>
        <end position="413"/>
    </location>
</feature>
<feature type="strand" evidence="21">
    <location>
        <begin position="421"/>
        <end position="423"/>
    </location>
</feature>
<feature type="turn" evidence="21">
    <location>
        <begin position="424"/>
        <end position="429"/>
    </location>
</feature>
<feature type="helix" evidence="21">
    <location>
        <begin position="431"/>
        <end position="433"/>
    </location>
</feature>
<feature type="helix" evidence="21">
    <location>
        <begin position="434"/>
        <end position="448"/>
    </location>
</feature>
<feature type="strand" evidence="21">
    <location>
        <begin position="454"/>
        <end position="458"/>
    </location>
</feature>
<feature type="strand" evidence="19">
    <location>
        <begin position="461"/>
        <end position="463"/>
    </location>
</feature>
<feature type="helix" evidence="21">
    <location>
        <begin position="467"/>
        <end position="479"/>
    </location>
</feature>
<feature type="strand" evidence="34">
    <location>
        <begin position="485"/>
        <end position="487"/>
    </location>
</feature>
<feature type="turn" evidence="21">
    <location>
        <begin position="489"/>
        <end position="491"/>
    </location>
</feature>
<feature type="strand" evidence="21">
    <location>
        <begin position="492"/>
        <end position="494"/>
    </location>
</feature>
<feature type="strand" evidence="21">
    <location>
        <begin position="498"/>
        <end position="500"/>
    </location>
</feature>
<feature type="strand" evidence="28">
    <location>
        <begin position="507"/>
        <end position="509"/>
    </location>
</feature>
<feature type="strand" evidence="21">
    <location>
        <begin position="514"/>
        <end position="516"/>
    </location>
</feature>
<feature type="helix" evidence="21">
    <location>
        <begin position="521"/>
        <end position="525"/>
    </location>
</feature>
<feature type="strand" evidence="21">
    <location>
        <begin position="534"/>
        <end position="540"/>
    </location>
</feature>
<feature type="strand" evidence="20">
    <location>
        <begin position="543"/>
        <end position="545"/>
    </location>
</feature>
<feature type="helix" evidence="21">
    <location>
        <begin position="550"/>
        <end position="559"/>
    </location>
</feature>
<feature type="strand" evidence="21">
    <location>
        <begin position="563"/>
        <end position="569"/>
    </location>
</feature>
<feature type="strand" evidence="31">
    <location>
        <begin position="571"/>
        <end position="573"/>
    </location>
</feature>
<feature type="strand" evidence="21">
    <location>
        <begin position="576"/>
        <end position="579"/>
    </location>
</feature>
<feature type="strand" evidence="29">
    <location>
        <begin position="581"/>
        <end position="583"/>
    </location>
</feature>
<feature type="strand" evidence="21">
    <location>
        <begin position="585"/>
        <end position="588"/>
    </location>
</feature>
<feature type="turn" evidence="21">
    <location>
        <begin position="590"/>
        <end position="593"/>
    </location>
</feature>
<feature type="helix" evidence="21">
    <location>
        <begin position="600"/>
        <end position="603"/>
    </location>
</feature>
<feature type="strand" evidence="33">
    <location>
        <begin position="605"/>
        <end position="608"/>
    </location>
</feature>
<feature type="helix" evidence="21">
    <location>
        <begin position="617"/>
        <end position="624"/>
    </location>
</feature>
<feature type="strand" evidence="21">
    <location>
        <begin position="627"/>
        <end position="633"/>
    </location>
</feature>
<feature type="strand" evidence="21">
    <location>
        <begin position="636"/>
        <end position="641"/>
    </location>
</feature>
<feature type="strand" evidence="21">
    <location>
        <begin position="652"/>
        <end position="659"/>
    </location>
</feature>
<feature type="strand" evidence="21">
    <location>
        <begin position="662"/>
        <end position="670"/>
    </location>
</feature>
<feature type="strand" evidence="21">
    <location>
        <begin position="678"/>
        <end position="682"/>
    </location>
</feature>
<feature type="strand" evidence="21">
    <location>
        <begin position="691"/>
        <end position="703"/>
    </location>
</feature>
<feature type="strand" evidence="22">
    <location>
        <begin position="708"/>
        <end position="710"/>
    </location>
</feature>
<feature type="strand" evidence="21">
    <location>
        <begin position="714"/>
        <end position="726"/>
    </location>
</feature>
<feature type="strand" evidence="21">
    <location>
        <begin position="740"/>
        <end position="743"/>
    </location>
</feature>
<feature type="strand" evidence="21">
    <location>
        <begin position="745"/>
        <end position="752"/>
    </location>
</feature>
<feature type="strand" evidence="21">
    <location>
        <begin position="755"/>
        <end position="760"/>
    </location>
</feature>
<feature type="turn" evidence="21">
    <location>
        <begin position="761"/>
        <end position="763"/>
    </location>
</feature>
<feature type="strand" evidence="21">
    <location>
        <begin position="765"/>
        <end position="771"/>
    </location>
</feature>
<feature type="strand" evidence="21">
    <location>
        <begin position="777"/>
        <end position="784"/>
    </location>
</feature>
<feature type="helix" evidence="21">
    <location>
        <begin position="791"/>
        <end position="794"/>
    </location>
</feature>
<feature type="strand" evidence="23">
    <location>
        <begin position="799"/>
        <end position="801"/>
    </location>
</feature>
<feature type="strand" evidence="25">
    <location>
        <begin position="804"/>
        <end position="806"/>
    </location>
</feature>
<feature type="helix" evidence="21">
    <location>
        <begin position="807"/>
        <end position="814"/>
    </location>
</feature>
<feature type="turn" evidence="21">
    <location>
        <begin position="815"/>
        <end position="818"/>
    </location>
</feature>
<feature type="strand" evidence="21">
    <location>
        <begin position="820"/>
        <end position="830"/>
    </location>
</feature>
<feature type="strand" evidence="21">
    <location>
        <begin position="832"/>
        <end position="845"/>
    </location>
</feature>
<feature type="strand" evidence="21">
    <location>
        <begin position="848"/>
        <end position="860"/>
    </location>
</feature>
<feature type="turn" evidence="18">
    <location>
        <begin position="861"/>
        <end position="863"/>
    </location>
</feature>
<feature type="strand" evidence="21">
    <location>
        <begin position="865"/>
        <end position="873"/>
    </location>
</feature>
<feature type="strand" evidence="28">
    <location>
        <begin position="875"/>
        <end position="877"/>
    </location>
</feature>
<feature type="strand" evidence="21">
    <location>
        <begin position="881"/>
        <end position="890"/>
    </location>
</feature>
<feature type="strand" evidence="21">
    <location>
        <begin position="894"/>
        <end position="904"/>
    </location>
</feature>
<feature type="strand" evidence="21">
    <location>
        <begin position="915"/>
        <end position="922"/>
    </location>
</feature>
<feature type="helix" evidence="21">
    <location>
        <begin position="923"/>
        <end position="926"/>
    </location>
</feature>
<feature type="strand" evidence="21">
    <location>
        <begin position="939"/>
        <end position="947"/>
    </location>
</feature>
<feature type="strand" evidence="21">
    <location>
        <begin position="950"/>
        <end position="963"/>
    </location>
</feature>
<feature type="helix" evidence="21">
    <location>
        <begin position="965"/>
        <end position="970"/>
    </location>
</feature>
<feature type="helix" evidence="21">
    <location>
        <begin position="974"/>
        <end position="976"/>
    </location>
</feature>
<feature type="strand" evidence="21">
    <location>
        <begin position="981"/>
        <end position="991"/>
    </location>
</feature>
<feature type="strand" evidence="21">
    <location>
        <begin position="999"/>
        <end position="1001"/>
    </location>
</feature>
<feature type="helix" evidence="21">
    <location>
        <begin position="1006"/>
        <end position="1008"/>
    </location>
</feature>
<feature type="strand" evidence="21">
    <location>
        <begin position="1013"/>
        <end position="1022"/>
    </location>
</feature>
<reference key="1">
    <citation type="journal article" date="1983" name="EMBO J.">
        <title>Sequence of the lacZ gene of Escherichia coli.</title>
        <authorList>
            <person name="Kalnins A."/>
            <person name="Otto K."/>
            <person name="Ruether U."/>
            <person name="Mueller-Hill B."/>
        </authorList>
    </citation>
    <scope>NUCLEOTIDE SEQUENCE [GENOMIC DNA]</scope>
</reference>
<reference key="2">
    <citation type="submission" date="1997-01" db="EMBL/GenBank/DDBJ databases">
        <title>Sequence of minutes 4-25 of Escherichia coli.</title>
        <authorList>
            <person name="Chung E."/>
            <person name="Allen E."/>
            <person name="Araujo R."/>
            <person name="Aparicio A.M."/>
            <person name="Davis K."/>
            <person name="Duncan M."/>
            <person name="Federspiel N."/>
            <person name="Hyman R."/>
            <person name="Kalman S."/>
            <person name="Komp C."/>
            <person name="Kurdi O."/>
            <person name="Lew H."/>
            <person name="Lin D."/>
            <person name="Namath A."/>
            <person name="Oefner P."/>
            <person name="Roberts D."/>
            <person name="Schramm S."/>
            <person name="Davis R.W."/>
        </authorList>
    </citation>
    <scope>NUCLEOTIDE SEQUENCE [LARGE SCALE GENOMIC DNA]</scope>
    <source>
        <strain>K12 / MG1655 / ATCC 47076</strain>
    </source>
</reference>
<reference key="3">
    <citation type="journal article" date="1997" name="Science">
        <title>The complete genome sequence of Escherichia coli K-12.</title>
        <authorList>
            <person name="Blattner F.R."/>
            <person name="Plunkett G. III"/>
            <person name="Bloch C.A."/>
            <person name="Perna N.T."/>
            <person name="Burland V."/>
            <person name="Riley M."/>
            <person name="Collado-Vides J."/>
            <person name="Glasner J.D."/>
            <person name="Rode C.K."/>
            <person name="Mayhew G.F."/>
            <person name="Gregor J."/>
            <person name="Davis N.W."/>
            <person name="Kirkpatrick H.A."/>
            <person name="Goeden M.A."/>
            <person name="Rose D.J."/>
            <person name="Mau B."/>
            <person name="Shao Y."/>
        </authorList>
    </citation>
    <scope>NUCLEOTIDE SEQUENCE [LARGE SCALE GENOMIC DNA]</scope>
    <source>
        <strain>K12 / MG1655 / ATCC 47076</strain>
    </source>
</reference>
<reference key="4">
    <citation type="journal article" date="2006" name="Mol. Syst. Biol.">
        <title>Highly accurate genome sequences of Escherichia coli K-12 strains MG1655 and W3110.</title>
        <authorList>
            <person name="Hayashi K."/>
            <person name="Morooka N."/>
            <person name="Yamamoto Y."/>
            <person name="Fujita K."/>
            <person name="Isono K."/>
            <person name="Choi S."/>
            <person name="Ohtsubo E."/>
            <person name="Baba T."/>
            <person name="Wanner B.L."/>
            <person name="Mori H."/>
            <person name="Horiuchi T."/>
        </authorList>
    </citation>
    <scope>NUCLEOTIDE SEQUENCE [LARGE SCALE GENOMIC DNA]</scope>
    <source>
        <strain>K12 / W3110 / ATCC 27325 / DSM 5911</strain>
    </source>
</reference>
<reference key="5">
    <citation type="journal article" date="1978" name="J. Biol. Chem.">
        <title>Amino acid sequence of beta-galactosidase. XI. Peptide ordering procedures and the complete sequence.</title>
        <authorList>
            <person name="Fowler A.V."/>
            <person name="Zabin I."/>
        </authorList>
    </citation>
    <scope>PROTEIN SEQUENCE OF 2-1024</scope>
</reference>
<reference key="6">
    <citation type="journal article" date="1980" name="Nature">
        <title>Molecular consequences of deletion formation mediated by the transposon Tn9.</title>
        <authorList>
            <person name="Calos M.P."/>
            <person name="Miller J.H."/>
        </authorList>
    </citation>
    <scope>NUCLEOTIDE SEQUENCE [GENOMIC DNA] OF 356-476</scope>
</reference>
<reference key="7">
    <citation type="journal article" date="1980" name="Nature">
        <title>Sequence of the lactose permease gene.</title>
        <authorList>
            <person name="Buechel D.E."/>
            <person name="Gronenborn B."/>
            <person name="Mueller-Hill B."/>
        </authorList>
    </citation>
    <scope>NUCLEOTIDE SEQUENCE [GENOMIC DNA] OF 1008-1024</scope>
</reference>
<reference key="8">
    <citation type="journal article" date="1972" name="J. Mol. Biol.">
        <title>lac repressor-operator interaction. VI. The natural inducer of the lac operon.</title>
        <authorList>
            <person name="Jobe A."/>
            <person name="Bourgeois S."/>
        </authorList>
    </citation>
    <scope>INDUCTION BY ALLOLACTOSE</scope>
</reference>
<reference key="9">
    <citation type="journal article" date="1979" name="Biochemistry">
        <title>Interaction of divalent cations with beta-galactosidase (Escherichia coli).</title>
        <authorList>
            <person name="Huber R.E."/>
            <person name="Parfett C."/>
            <person name="Woulfe-Flanagan H."/>
            <person name="Thompson D.J."/>
        </authorList>
    </citation>
    <scope>BIOPHYSICOCHEMICAL PROPERTIES</scope>
    <scope>COFACTOR</scope>
</reference>
<reference key="10">
    <citation type="journal article" date="1983" name="J. Biol. Chem.">
        <title>The active site regions of lacZ and ebg beta-galactosidases are homologous.</title>
        <authorList>
            <person name="Fowler A.V."/>
            <person name="Smith P.J."/>
        </authorList>
    </citation>
    <scope>ACTIVE SITE REGIONS</scope>
</reference>
<reference key="11">
    <citation type="journal article" date="1984" name="Eur. J. Biochem.">
        <title>Identification of an essential carboxylate group at the active site of lacZ beta-galactosidase from Escherichia coli.</title>
        <authorList>
            <person name="Herrchen M."/>
            <person name="Legler G."/>
        </authorList>
    </citation>
    <scope>ACTIVE SITE GLU-462</scope>
</reference>
<reference key="12">
    <citation type="journal article" date="1992" name="J. Biol. Chem.">
        <title>Glu-537, not Glu-461, is the nucleophile in the active site of (lac Z) beta-galactosidase from Escherichia coli.</title>
        <authorList>
            <person name="Gebler J.C."/>
            <person name="Aebersold R."/>
            <person name="Withers S.G."/>
        </authorList>
    </citation>
    <scope>ACTIVE SITE GLU-538</scope>
</reference>
<reference key="13">
    <citation type="journal article" date="1995" name="Biochemistry">
        <title>E461H-beta-galactosidase (Escherichia coli): altered divalent metal specificity and slow but reversible metal inactivation.</title>
        <authorList>
            <person name="Martinez-Bilbao M."/>
            <person name="Gaunt M.T."/>
            <person name="Huber R.E."/>
        </authorList>
    </citation>
    <scope>MUTAGENESIS OF GLU-462</scope>
    <scope>COFACTOR</scope>
</reference>
<reference key="14">
    <citation type="journal article" date="1996" name="J. Biol. Chem.">
        <title>The beta-galactosidase (Escherichia coli) reaction is partly facilitated by interactions of His-540 with the C6 hydroxyl of galactose.</title>
        <authorList>
            <person name="Roth N.J."/>
            <person name="Huber R.E."/>
        </authorList>
    </citation>
    <scope>BIOPHYSICOCHEMICAL PROPERTIES</scope>
    <scope>MUTAGENESIS OF HIS-541</scope>
</reference>
<reference key="15">
    <citation type="journal article" date="1997" name="Electrophoresis">
        <title>Escherichia coli proteome analysis using the gene-protein database.</title>
        <authorList>
            <person name="VanBogelen R.A."/>
            <person name="Abshire K.Z."/>
            <person name="Moldover B."/>
            <person name="Olson E.R."/>
            <person name="Neidhardt F.C."/>
        </authorList>
    </citation>
    <scope>IDENTIFICATION BY 2D-GEL</scope>
</reference>
<reference key="16">
    <citation type="journal article" date="1998" name="Biochemistry">
        <title>His-357 of beta-galactosidase (Escherichia coli) interacts with the C3 hydroxyl in the transition state and helps to mediate catalysis.</title>
        <authorList>
            <person name="Roth N.J."/>
            <person name="Rob B."/>
            <person name="Huber R.E."/>
        </authorList>
    </citation>
    <scope>BIOPHYSICOCHEMICAL PROPERTIES</scope>
    <scope>MUTAGENESIS OF HIS-358</scope>
</reference>
<reference key="17">
    <citation type="journal article" date="2001" name="Biochem. Cell Biol.">
        <title>His-391 of beta-galactosidase (Escherichia coli) promotes catalyses by strong interactions with the transition state.</title>
        <authorList>
            <person name="Huber R.E."/>
            <person name="Hlede I.Y."/>
            <person name="Roth N.J."/>
            <person name="McKenzie K.C."/>
            <person name="Ghumman K.K."/>
        </authorList>
    </citation>
    <scope>MUTAGENESIS OF HIS-392</scope>
</reference>
<reference key="18">
    <citation type="journal article" date="2003" name="Biochemistry">
        <title>Trp-999 of beta-galactosidase (Escherichia coli) is a key residue for binding, catalysis, and synthesis of allolactose, the natural lac operon inducer.</title>
        <authorList>
            <person name="Huber R.E."/>
            <person name="Hakda S."/>
            <person name="Cheng C."/>
            <person name="Cupples C.G."/>
            <person name="Edwards R.A."/>
        </authorList>
    </citation>
    <scope>BIOPHYSICOCHEMICAL PROPERTIES</scope>
    <scope>MUTAGENESIS OF TRP-1000</scope>
</reference>
<reference key="19">
    <citation type="journal article" date="2004" name="Biochem. Cell Biol.">
        <title>A study of the relationships of interactions between Asp-201, Na+ or K+, and galactosyl C6 hydroxyl and their effects on binding and reactivity of beta-galactosidase.</title>
        <authorList>
            <person name="Xu J."/>
            <person name="McRae M.A."/>
            <person name="Harron S."/>
            <person name="Rob B."/>
            <person name="Huber R.E."/>
        </authorList>
    </citation>
    <scope>BIOPHYSICOCHEMICAL PROPERTIES</scope>
    <scope>MUTAGENESIS OF ASP-202</scope>
</reference>
<reference key="20">
    <citation type="journal article" date="2005" name="C. R. Biol.">
        <title>The structure of E. coli beta-galactosidase.</title>
        <authorList>
            <person name="Matthews B.W."/>
        </authorList>
    </citation>
    <scope>REVIEW</scope>
</reference>
<reference key="21">
    <citation type="journal article" date="2007" name="Biochem. Biophys. Res. Commun.">
        <title>Beta-galactosidase (Escherichia coli) has a second catalytically important Mg2+ site.</title>
        <authorList>
            <person name="Sutendra G."/>
            <person name="Wong S."/>
            <person name="Fraser M.E."/>
            <person name="Huber R.E."/>
        </authorList>
    </citation>
    <scope>COFACTOR</scope>
    <scope>MUTAGENESIS OF GLU-798</scope>
</reference>
<reference key="22">
    <citation type="journal article" date="1994" name="Nature">
        <title>Three-dimensional structure of beta-galactosidase from E. coli.</title>
        <authorList>
            <person name="Jacobson R.H."/>
            <person name="Zhang X.-J."/>
            <person name="Dubose R.F."/>
            <person name="Matthews B.W."/>
        </authorList>
    </citation>
    <scope>X-RAY CRYSTALLOGRAPHY (3.5 ANGSTROMS) IN COMPLEX WITH MAGNESIUM IONS</scope>
    <scope>SUBUNIT</scope>
</reference>
<reference key="23">
    <citation type="journal article" date="2000" name="Protein Sci.">
        <title>High resolution refinement of beta-galactosidase in a new crystal form reveals multiple metal-binding sites and provides a structural basis for alpha-complementation.</title>
        <authorList>
            <person name="Juers D.H."/>
            <person name="Jacobson R.H."/>
            <person name="Wigley D."/>
            <person name="Zhang X.-J."/>
            <person name="Huber R.E."/>
            <person name="Tronrud D.E."/>
            <person name="Matthews B.W."/>
        </authorList>
    </citation>
    <scope>X-RAY CRYSTALLOGRAPHY (2.5 ANGSTROMS) IN COMPLEX WITH MAGNESIUM AND SODIUM IONS</scope>
</reference>
<reference key="24">
    <citation type="journal article" date="2001" name="Biochemistry">
        <title>A structural view of the action of Escherichia coli (lacZ) beta-galactosidase.</title>
        <authorList>
            <person name="Juers D.H."/>
            <person name="Heightman T.D."/>
            <person name="Vasella A."/>
            <person name="McCarter J.D."/>
            <person name="Mackenzie L."/>
            <person name="Withers S.G."/>
            <person name="Matthews B.W."/>
        </authorList>
    </citation>
    <scope>X-RAY CRYSTALLOGRAPHY (1.8 ANGSTROMS) IN COMPLEX WITH SUBSTRATE ANALOGS</scope>
    <scope>MUTAGENESIS OF GLU-538 AND PHE-602</scope>
    <scope>REACTION MECHANISM</scope>
</reference>
<reference key="25">
    <citation type="journal article" date="2003" name="Biochemistry">
        <title>Structural basis for the altered activity of Gly794 variants of Escherichia coli beta-galactosidase.</title>
        <authorList>
            <person name="Juers D.H."/>
            <person name="Hakda S."/>
            <person name="Matthews B.W."/>
            <person name="Huber R.E."/>
        </authorList>
    </citation>
    <scope>X-RAY CRYSTALLOGRAPHY (1.6 ANGSTROMS) OF 10-1024 OF MUTANT ALA-795 IN COMPLEX WITH MAGNESIUM IONS</scope>
    <scope>SODIUM IONS AND SUBSTRATE ANALOGS</scope>
    <scope>BIOPHYSICOCHEMICAL PROPERTIES</scope>
    <scope>ACTIVITY REGULATION</scope>
    <scope>MUTAGENESIS OF GLY-795</scope>
</reference>
<keyword id="KW-0002">3D-structure</keyword>
<keyword id="KW-0903">Direct protein sequencing</keyword>
<keyword id="KW-0326">Glycosidase</keyword>
<keyword id="KW-0378">Hydrolase</keyword>
<keyword id="KW-0460">Magnesium</keyword>
<keyword id="KW-0464">Manganese</keyword>
<keyword id="KW-0479">Metal-binding</keyword>
<keyword id="KW-1185">Reference proteome</keyword>
<keyword id="KW-0915">Sodium</keyword>